<dbReference type="EC" id="7.1.1.-" evidence="1"/>
<dbReference type="EMBL" id="AP009374">
    <property type="protein sequence ID" value="BAF50464.1"/>
    <property type="molecule type" value="Genomic_DNA"/>
</dbReference>
<dbReference type="RefSeq" id="YP_001123640.1">
    <property type="nucleotide sequence ID" value="NC_009273.1"/>
</dbReference>
<dbReference type="SMR" id="A4QLA9"/>
<dbReference type="GeneID" id="4962016"/>
<dbReference type="GO" id="GO:0009535">
    <property type="term" value="C:chloroplast thylakoid membrane"/>
    <property type="evidence" value="ECO:0007669"/>
    <property type="project" value="UniProtKB-SubCell"/>
</dbReference>
<dbReference type="GO" id="GO:0008137">
    <property type="term" value="F:NADH dehydrogenase (ubiquinone) activity"/>
    <property type="evidence" value="ECO:0007669"/>
    <property type="project" value="InterPro"/>
</dbReference>
<dbReference type="GO" id="GO:0048038">
    <property type="term" value="F:quinone binding"/>
    <property type="evidence" value="ECO:0007669"/>
    <property type="project" value="UniProtKB-KW"/>
</dbReference>
<dbReference type="GO" id="GO:0019684">
    <property type="term" value="P:photosynthesis, light reaction"/>
    <property type="evidence" value="ECO:0007669"/>
    <property type="project" value="UniProtKB-UniRule"/>
</dbReference>
<dbReference type="FunFam" id="3.30.460.80:FF:000004">
    <property type="entry name" value="NAD(P)H-quinone oxidoreductase subunit J, chloroplastic"/>
    <property type="match status" value="1"/>
</dbReference>
<dbReference type="Gene3D" id="3.30.460.80">
    <property type="entry name" value="NADH:ubiquinone oxidoreductase, 30kDa subunit"/>
    <property type="match status" value="1"/>
</dbReference>
<dbReference type="HAMAP" id="MF_01357">
    <property type="entry name" value="NDH1_NuoC"/>
    <property type="match status" value="1"/>
</dbReference>
<dbReference type="InterPro" id="IPR010218">
    <property type="entry name" value="NADH_DH_suC"/>
</dbReference>
<dbReference type="InterPro" id="IPR037232">
    <property type="entry name" value="NADH_quin_OxRdtase_su_C/D-like"/>
</dbReference>
<dbReference type="InterPro" id="IPR001268">
    <property type="entry name" value="NADH_UbQ_OxRdtase_30kDa_su"/>
</dbReference>
<dbReference type="InterPro" id="IPR020396">
    <property type="entry name" value="NADH_UbQ_OxRdtase_CS"/>
</dbReference>
<dbReference type="NCBIfam" id="NF009141">
    <property type="entry name" value="PRK12494.1"/>
    <property type="match status" value="1"/>
</dbReference>
<dbReference type="PANTHER" id="PTHR10884:SF14">
    <property type="entry name" value="NADH DEHYDROGENASE [UBIQUINONE] IRON-SULFUR PROTEIN 3, MITOCHONDRIAL"/>
    <property type="match status" value="1"/>
</dbReference>
<dbReference type="PANTHER" id="PTHR10884">
    <property type="entry name" value="NADH DEHYDROGENASE UBIQUINONE IRON-SULFUR PROTEIN 3"/>
    <property type="match status" value="1"/>
</dbReference>
<dbReference type="Pfam" id="PF00329">
    <property type="entry name" value="Complex1_30kDa"/>
    <property type="match status" value="1"/>
</dbReference>
<dbReference type="SUPFAM" id="SSF143243">
    <property type="entry name" value="Nqo5-like"/>
    <property type="match status" value="1"/>
</dbReference>
<dbReference type="PROSITE" id="PS00542">
    <property type="entry name" value="COMPLEX1_30K"/>
    <property type="match status" value="1"/>
</dbReference>
<gene>
    <name evidence="1" type="primary">ndhJ</name>
</gene>
<name>NDHJ_LEPVR</name>
<geneLocation type="chloroplast"/>
<comment type="function">
    <text evidence="1">NDH shuttles electrons from NAD(P)H:plastoquinone, via FMN and iron-sulfur (Fe-S) centers, to quinones in the photosynthetic chain and possibly in a chloroplast respiratory chain. The immediate electron acceptor for the enzyme in this species is believed to be plastoquinone. Couples the redox reaction to proton translocation, and thus conserves the redox energy in a proton gradient.</text>
</comment>
<comment type="catalytic activity">
    <reaction evidence="1">
        <text>a plastoquinone + NADH + (n+1) H(+)(in) = a plastoquinol + NAD(+) + n H(+)(out)</text>
        <dbReference type="Rhea" id="RHEA:42608"/>
        <dbReference type="Rhea" id="RHEA-COMP:9561"/>
        <dbReference type="Rhea" id="RHEA-COMP:9562"/>
        <dbReference type="ChEBI" id="CHEBI:15378"/>
        <dbReference type="ChEBI" id="CHEBI:17757"/>
        <dbReference type="ChEBI" id="CHEBI:57540"/>
        <dbReference type="ChEBI" id="CHEBI:57945"/>
        <dbReference type="ChEBI" id="CHEBI:62192"/>
    </reaction>
</comment>
<comment type="catalytic activity">
    <reaction evidence="1">
        <text>a plastoquinone + NADPH + (n+1) H(+)(in) = a plastoquinol + NADP(+) + n H(+)(out)</text>
        <dbReference type="Rhea" id="RHEA:42612"/>
        <dbReference type="Rhea" id="RHEA-COMP:9561"/>
        <dbReference type="Rhea" id="RHEA-COMP:9562"/>
        <dbReference type="ChEBI" id="CHEBI:15378"/>
        <dbReference type="ChEBI" id="CHEBI:17757"/>
        <dbReference type="ChEBI" id="CHEBI:57783"/>
        <dbReference type="ChEBI" id="CHEBI:58349"/>
        <dbReference type="ChEBI" id="CHEBI:62192"/>
    </reaction>
</comment>
<comment type="subunit">
    <text evidence="1">NDH is composed of at least 16 different subunits, 5 of which are encoded in the nucleus.</text>
</comment>
<comment type="subcellular location">
    <subcellularLocation>
        <location evidence="1">Plastid</location>
        <location evidence="1">Chloroplast thylakoid membrane</location>
        <topology evidence="1">Peripheral membrane protein</topology>
        <orientation evidence="1">Stromal side</orientation>
    </subcellularLocation>
</comment>
<comment type="similarity">
    <text evidence="1">Belongs to the complex I 30 kDa subunit family.</text>
</comment>
<reference key="1">
    <citation type="submission" date="2007-03" db="EMBL/GenBank/DDBJ databases">
        <title>Sequencing analysis of Lepidium virginicum JO26 chloroplast DNA.</title>
        <authorList>
            <person name="Hosouchi T."/>
            <person name="Tsuruoka H."/>
            <person name="Kotani H."/>
        </authorList>
    </citation>
    <scope>NUCLEOTIDE SEQUENCE [LARGE SCALE GENOMIC DNA]</scope>
</reference>
<protein>
    <recommendedName>
        <fullName evidence="1">NAD(P)H-quinone oxidoreductase subunit J, chloroplastic</fullName>
        <ecNumber evidence="1">7.1.1.-</ecNumber>
    </recommendedName>
    <alternativeName>
        <fullName>NAD(P)H dehydrogenase subunit J</fullName>
    </alternativeName>
    <alternativeName>
        <fullName evidence="1">NADH-plastoquinone oxidoreductase subunit J</fullName>
    </alternativeName>
</protein>
<accession>A4QLA9</accession>
<evidence type="ECO:0000255" key="1">
    <source>
        <dbReference type="HAMAP-Rule" id="MF_01357"/>
    </source>
</evidence>
<keyword id="KW-0150">Chloroplast</keyword>
<keyword id="KW-0472">Membrane</keyword>
<keyword id="KW-0520">NAD</keyword>
<keyword id="KW-0521">NADP</keyword>
<keyword id="KW-0934">Plastid</keyword>
<keyword id="KW-0618">Plastoquinone</keyword>
<keyword id="KW-0874">Quinone</keyword>
<keyword id="KW-0793">Thylakoid</keyword>
<keyword id="KW-1278">Translocase</keyword>
<keyword id="KW-0813">Transport</keyword>
<organism>
    <name type="scientific">Lepidium virginicum</name>
    <name type="common">Virginia pepperweed</name>
    <dbReference type="NCBI Taxonomy" id="59292"/>
    <lineage>
        <taxon>Eukaryota</taxon>
        <taxon>Viridiplantae</taxon>
        <taxon>Streptophyta</taxon>
        <taxon>Embryophyta</taxon>
        <taxon>Tracheophyta</taxon>
        <taxon>Spermatophyta</taxon>
        <taxon>Magnoliopsida</taxon>
        <taxon>eudicotyledons</taxon>
        <taxon>Gunneridae</taxon>
        <taxon>Pentapetalae</taxon>
        <taxon>rosids</taxon>
        <taxon>malvids</taxon>
        <taxon>Brassicales</taxon>
        <taxon>Brassicaceae</taxon>
        <taxon>Lepidieae</taxon>
        <taxon>Lepidium</taxon>
    </lineage>
</organism>
<sequence>MQGTLSVWLAKRGLVHRSLGFDYQGIETLQIKPEDWHSIAVILYVYGYNYLRSQCAYDVAPGGLLASVYHLTRIEYGVNQAEEVCIKVFTHRSNPRIPSVFWVWKSTDFQERESYDMLGITYDSHPRLKRILMPESWIGWPLRKDYIAPNFYEIQDAY</sequence>
<proteinExistence type="inferred from homology"/>
<feature type="chain" id="PRO_0000358277" description="NAD(P)H-quinone oxidoreductase subunit J, chloroplastic">
    <location>
        <begin position="1"/>
        <end position="158"/>
    </location>
</feature>